<reference key="1">
    <citation type="journal article" date="2009" name="Genome Biol.">
        <title>Genomic and genetic analyses of diversity and plant interactions of Pseudomonas fluorescens.</title>
        <authorList>
            <person name="Silby M.W."/>
            <person name="Cerdeno-Tarraga A.M."/>
            <person name="Vernikos G.S."/>
            <person name="Giddens S.R."/>
            <person name="Jackson R.W."/>
            <person name="Preston G.M."/>
            <person name="Zhang X.-X."/>
            <person name="Moon C.D."/>
            <person name="Gehrig S.M."/>
            <person name="Godfrey S.A.C."/>
            <person name="Knight C.G."/>
            <person name="Malone J.G."/>
            <person name="Robinson Z."/>
            <person name="Spiers A.J."/>
            <person name="Harris S."/>
            <person name="Challis G.L."/>
            <person name="Yaxley A.M."/>
            <person name="Harris D."/>
            <person name="Seeger K."/>
            <person name="Murphy L."/>
            <person name="Rutter S."/>
            <person name="Squares R."/>
            <person name="Quail M.A."/>
            <person name="Saunders E."/>
            <person name="Mavromatis K."/>
            <person name="Brettin T.S."/>
            <person name="Bentley S.D."/>
            <person name="Hothersall J."/>
            <person name="Stephens E."/>
            <person name="Thomas C.M."/>
            <person name="Parkhill J."/>
            <person name="Levy S.B."/>
            <person name="Rainey P.B."/>
            <person name="Thomson N.R."/>
        </authorList>
    </citation>
    <scope>NUCLEOTIDE SEQUENCE [LARGE SCALE GENOMIC DNA]</scope>
    <source>
        <strain>SBW25</strain>
    </source>
</reference>
<comment type="function">
    <text evidence="1">Catalyzes the catabolism of the allantoin degradation intermediate (S)-ureidoglycolate, generating urea and glyoxylate. Involved in the utilization of allantoin as nitrogen source.</text>
</comment>
<comment type="catalytic activity">
    <reaction evidence="1">
        <text>(S)-ureidoglycolate = urea + glyoxylate</text>
        <dbReference type="Rhea" id="RHEA:11304"/>
        <dbReference type="ChEBI" id="CHEBI:16199"/>
        <dbReference type="ChEBI" id="CHEBI:36655"/>
        <dbReference type="ChEBI" id="CHEBI:57296"/>
        <dbReference type="EC" id="4.3.2.3"/>
    </reaction>
</comment>
<comment type="cofactor">
    <cofactor evidence="1">
        <name>Ni(2+)</name>
        <dbReference type="ChEBI" id="CHEBI:49786"/>
    </cofactor>
</comment>
<comment type="pathway">
    <text evidence="1">Nitrogen metabolism; (S)-allantoin degradation.</text>
</comment>
<comment type="subunit">
    <text evidence="1">Homodimer.</text>
</comment>
<comment type="similarity">
    <text evidence="1">Belongs to the ureidoglycolate lyase family.</text>
</comment>
<name>ALLA_PSEFS</name>
<dbReference type="EC" id="4.3.2.3" evidence="1"/>
<dbReference type="EMBL" id="AM181176">
    <property type="protein sequence ID" value="CAY50985.1"/>
    <property type="molecule type" value="Genomic_DNA"/>
</dbReference>
<dbReference type="RefSeq" id="WP_015885126.1">
    <property type="nucleotide sequence ID" value="NC_012660.1"/>
</dbReference>
<dbReference type="SMR" id="C3K0A8"/>
<dbReference type="STRING" id="294.SRM1_01780"/>
<dbReference type="eggNOG" id="COG3194">
    <property type="taxonomic scope" value="Bacteria"/>
</dbReference>
<dbReference type="HOGENOM" id="CLU_070848_1_0_6"/>
<dbReference type="OrthoDB" id="9804602at2"/>
<dbReference type="UniPathway" id="UPA00395"/>
<dbReference type="GO" id="GO:0004848">
    <property type="term" value="F:ureidoglycolate hydrolase activity"/>
    <property type="evidence" value="ECO:0007669"/>
    <property type="project" value="InterPro"/>
</dbReference>
<dbReference type="GO" id="GO:0050385">
    <property type="term" value="F:ureidoglycolate lyase activity"/>
    <property type="evidence" value="ECO:0007669"/>
    <property type="project" value="UniProtKB-UniRule"/>
</dbReference>
<dbReference type="GO" id="GO:0000256">
    <property type="term" value="P:allantoin catabolic process"/>
    <property type="evidence" value="ECO:0007669"/>
    <property type="project" value="UniProtKB-UniRule"/>
</dbReference>
<dbReference type="GO" id="GO:0006145">
    <property type="term" value="P:purine nucleobase catabolic process"/>
    <property type="evidence" value="ECO:0007669"/>
    <property type="project" value="UniProtKB-UniRule"/>
</dbReference>
<dbReference type="CDD" id="cd20298">
    <property type="entry name" value="cupin_UAH"/>
    <property type="match status" value="1"/>
</dbReference>
<dbReference type="Gene3D" id="2.60.120.480">
    <property type="entry name" value="Ureidoglycolate hydrolase"/>
    <property type="match status" value="1"/>
</dbReference>
<dbReference type="HAMAP" id="MF_00616">
    <property type="entry name" value="Ureidogly_lyase"/>
    <property type="match status" value="1"/>
</dbReference>
<dbReference type="InterPro" id="IPR011051">
    <property type="entry name" value="RmlC_Cupin_sf"/>
</dbReference>
<dbReference type="InterPro" id="IPR047233">
    <property type="entry name" value="UAH_cupin"/>
</dbReference>
<dbReference type="InterPro" id="IPR007247">
    <property type="entry name" value="Ureidogly_lyase"/>
</dbReference>
<dbReference type="InterPro" id="IPR023525">
    <property type="entry name" value="Ureidogly_lyase_bac"/>
</dbReference>
<dbReference type="InterPro" id="IPR024060">
    <property type="entry name" value="Ureidoglycolate_lyase_dom_sf"/>
</dbReference>
<dbReference type="NCBIfam" id="NF002949">
    <property type="entry name" value="PRK03606.1-2"/>
    <property type="match status" value="1"/>
</dbReference>
<dbReference type="NCBIfam" id="NF009932">
    <property type="entry name" value="PRK13395.1"/>
    <property type="match status" value="1"/>
</dbReference>
<dbReference type="PANTHER" id="PTHR21221">
    <property type="entry name" value="UREIDOGLYCOLATE HYDROLASE"/>
    <property type="match status" value="1"/>
</dbReference>
<dbReference type="PANTHER" id="PTHR21221:SF1">
    <property type="entry name" value="UREIDOGLYCOLATE LYASE"/>
    <property type="match status" value="1"/>
</dbReference>
<dbReference type="Pfam" id="PF04115">
    <property type="entry name" value="Ureidogly_lyase"/>
    <property type="match status" value="1"/>
</dbReference>
<dbReference type="PIRSF" id="PIRSF017306">
    <property type="entry name" value="Ureidogly_hydro"/>
    <property type="match status" value="1"/>
</dbReference>
<dbReference type="SUPFAM" id="SSF51182">
    <property type="entry name" value="RmlC-like cupins"/>
    <property type="match status" value="1"/>
</dbReference>
<gene>
    <name evidence="1" type="primary">allA</name>
    <name type="ordered locus">PFLU_4362</name>
</gene>
<feature type="chain" id="PRO_1000212281" description="Ureidoglycolate lyase">
    <location>
        <begin position="1"/>
        <end position="167"/>
    </location>
</feature>
<proteinExistence type="inferred from homology"/>
<accession>C3K0A8</accession>
<organism>
    <name type="scientific">Pseudomonas fluorescens (strain SBW25)</name>
    <dbReference type="NCBI Taxonomy" id="216595"/>
    <lineage>
        <taxon>Bacteria</taxon>
        <taxon>Pseudomonadati</taxon>
        <taxon>Pseudomonadota</taxon>
        <taxon>Gammaproteobacteria</taxon>
        <taxon>Pseudomonadales</taxon>
        <taxon>Pseudomonadaceae</taxon>
        <taxon>Pseudomonas</taxon>
    </lineage>
</organism>
<evidence type="ECO:0000255" key="1">
    <source>
        <dbReference type="HAMAP-Rule" id="MF_00616"/>
    </source>
</evidence>
<protein>
    <recommendedName>
        <fullName evidence="1">Ureidoglycolate lyase</fullName>
        <ecNumber evidence="1">4.3.2.3</ecNumber>
    </recommendedName>
    <alternativeName>
        <fullName evidence="1">Ureidoglycolatase</fullName>
    </alternativeName>
</protein>
<keyword id="KW-0456">Lyase</keyword>
<keyword id="KW-0659">Purine metabolism</keyword>
<sequence length="167" mass="18634">MRTLMIEPLTKEAFAPFGDVIETDGSDHFMINNGSTMRFHKLATVETAKPEDNAIISIFRADALDMPLTVCMLERHPLGSQAFIPLLGNPFLIVVAPLGDAPVSGLVRAFVTNGRQGINYHRGVWHHPVLTIEKRDDFLVVDRSGTGNNCDEHFFEEDERLILAPHQ</sequence>